<name>FIS_SHEPC</name>
<keyword id="KW-0010">Activator</keyword>
<keyword id="KW-0238">DNA-binding</keyword>
<keyword id="KW-0804">Transcription</keyword>
<keyword id="KW-0805">Transcription regulation</keyword>
<reference key="1">
    <citation type="submission" date="2007-04" db="EMBL/GenBank/DDBJ databases">
        <title>Complete sequence of Shewanella putrefaciens CN-32.</title>
        <authorList>
            <consortium name="US DOE Joint Genome Institute"/>
            <person name="Copeland A."/>
            <person name="Lucas S."/>
            <person name="Lapidus A."/>
            <person name="Barry K."/>
            <person name="Detter J.C."/>
            <person name="Glavina del Rio T."/>
            <person name="Hammon N."/>
            <person name="Israni S."/>
            <person name="Dalin E."/>
            <person name="Tice H."/>
            <person name="Pitluck S."/>
            <person name="Chain P."/>
            <person name="Malfatti S."/>
            <person name="Shin M."/>
            <person name="Vergez L."/>
            <person name="Schmutz J."/>
            <person name="Larimer F."/>
            <person name="Land M."/>
            <person name="Hauser L."/>
            <person name="Kyrpides N."/>
            <person name="Mikhailova N."/>
            <person name="Romine M.F."/>
            <person name="Fredrickson J."/>
            <person name="Tiedje J."/>
            <person name="Richardson P."/>
        </authorList>
    </citation>
    <scope>NUCLEOTIDE SEQUENCE [LARGE SCALE GENOMIC DNA]</scope>
    <source>
        <strain>CN-32 / ATCC BAA-453</strain>
    </source>
</reference>
<accession>A4YB21</accession>
<evidence type="ECO:0000255" key="1">
    <source>
        <dbReference type="HAMAP-Rule" id="MF_00166"/>
    </source>
</evidence>
<protein>
    <recommendedName>
        <fullName evidence="1">DNA-binding protein Fis</fullName>
    </recommendedName>
</protein>
<comment type="function">
    <text evidence="1">Activates ribosomal RNA transcription. Plays a direct role in upstream activation of rRNA promoters.</text>
</comment>
<comment type="subunit">
    <text evidence="1">Homodimer.</text>
</comment>
<comment type="similarity">
    <text evidence="1">Belongs to the transcriptional regulatory Fis family.</text>
</comment>
<gene>
    <name evidence="1" type="primary">fis</name>
    <name type="ordered locus">Sputcn32_3444</name>
</gene>
<proteinExistence type="inferred from homology"/>
<organism>
    <name type="scientific">Shewanella putrefaciens (strain CN-32 / ATCC BAA-453)</name>
    <dbReference type="NCBI Taxonomy" id="319224"/>
    <lineage>
        <taxon>Bacteria</taxon>
        <taxon>Pseudomonadati</taxon>
        <taxon>Pseudomonadota</taxon>
        <taxon>Gammaproteobacteria</taxon>
        <taxon>Alteromonadales</taxon>
        <taxon>Shewanellaceae</taxon>
        <taxon>Shewanella</taxon>
    </lineage>
</organism>
<dbReference type="EMBL" id="CP000681">
    <property type="protein sequence ID" value="ABP77154.1"/>
    <property type="molecule type" value="Genomic_DNA"/>
</dbReference>
<dbReference type="SMR" id="A4YB21"/>
<dbReference type="STRING" id="319224.Sputcn32_3444"/>
<dbReference type="KEGG" id="spc:Sputcn32_3444"/>
<dbReference type="eggNOG" id="COG2901">
    <property type="taxonomic scope" value="Bacteria"/>
</dbReference>
<dbReference type="HOGENOM" id="CLU_158040_3_3_6"/>
<dbReference type="GO" id="GO:0003700">
    <property type="term" value="F:DNA-binding transcription factor activity"/>
    <property type="evidence" value="ECO:0007669"/>
    <property type="project" value="UniProtKB-UniRule"/>
</dbReference>
<dbReference type="GO" id="GO:0043565">
    <property type="term" value="F:sequence-specific DNA binding"/>
    <property type="evidence" value="ECO:0007669"/>
    <property type="project" value="InterPro"/>
</dbReference>
<dbReference type="FunFam" id="1.10.10.60:FF:000006">
    <property type="entry name" value="DNA-binding protein Fis"/>
    <property type="match status" value="1"/>
</dbReference>
<dbReference type="Gene3D" id="1.10.10.60">
    <property type="entry name" value="Homeodomain-like"/>
    <property type="match status" value="1"/>
</dbReference>
<dbReference type="HAMAP" id="MF_00166">
    <property type="entry name" value="DNA_binding_Fis"/>
    <property type="match status" value="1"/>
</dbReference>
<dbReference type="InterPro" id="IPR005412">
    <property type="entry name" value="Fis_DNA-bd"/>
</dbReference>
<dbReference type="InterPro" id="IPR009057">
    <property type="entry name" value="Homeodomain-like_sf"/>
</dbReference>
<dbReference type="InterPro" id="IPR002197">
    <property type="entry name" value="HTH_Fis"/>
</dbReference>
<dbReference type="InterPro" id="IPR050207">
    <property type="entry name" value="Trans_regulatory_Fis"/>
</dbReference>
<dbReference type="NCBIfam" id="NF001659">
    <property type="entry name" value="PRK00430.1"/>
    <property type="match status" value="1"/>
</dbReference>
<dbReference type="PANTHER" id="PTHR47918">
    <property type="entry name" value="DNA-BINDING PROTEIN FIS"/>
    <property type="match status" value="1"/>
</dbReference>
<dbReference type="PANTHER" id="PTHR47918:SF1">
    <property type="entry name" value="DNA-BINDING PROTEIN FIS"/>
    <property type="match status" value="1"/>
</dbReference>
<dbReference type="Pfam" id="PF02954">
    <property type="entry name" value="HTH_8"/>
    <property type="match status" value="1"/>
</dbReference>
<dbReference type="PIRSF" id="PIRSF002097">
    <property type="entry name" value="DNA-binding_Fis"/>
    <property type="match status" value="1"/>
</dbReference>
<dbReference type="PRINTS" id="PR01591">
    <property type="entry name" value="DNABINDNGFIS"/>
</dbReference>
<dbReference type="PRINTS" id="PR01590">
    <property type="entry name" value="HTHFIS"/>
</dbReference>
<dbReference type="SUPFAM" id="SSF46689">
    <property type="entry name" value="Homeodomain-like"/>
    <property type="match status" value="1"/>
</dbReference>
<sequence>MFDQTTNTEVHQLTVGKIETANGTIKPQLLRDAVKRAVTNFFAQLDGQEAQEVYEMVLSEVEAPLLDIIMQHTRGNQTRAANMLGINRGTLRKKLKKYGMN</sequence>
<feature type="chain" id="PRO_1000023340" description="DNA-binding protein Fis">
    <location>
        <begin position="1"/>
        <end position="101"/>
    </location>
</feature>
<feature type="DNA-binding region" description="H-T-H motif" evidence="1">
    <location>
        <begin position="77"/>
        <end position="96"/>
    </location>
</feature>